<evidence type="ECO:0000255" key="1">
    <source>
        <dbReference type="HAMAP-Rule" id="MF_01813"/>
    </source>
</evidence>
<comment type="function">
    <text evidence="1">Methyltransferase required for the conversion of demethylmenaquinol (DMKH2) to menaquinol (MKH2) and the conversion of 2-polyprenyl-6-methoxy-1,4-benzoquinol (DDMQH2) to 2-polyprenyl-3-methyl-6-methoxy-1,4-benzoquinol (DMQH2).</text>
</comment>
<comment type="catalytic activity">
    <reaction evidence="1">
        <text>a 2-demethylmenaquinol + S-adenosyl-L-methionine = a menaquinol + S-adenosyl-L-homocysteine + H(+)</text>
        <dbReference type="Rhea" id="RHEA:42640"/>
        <dbReference type="Rhea" id="RHEA-COMP:9539"/>
        <dbReference type="Rhea" id="RHEA-COMP:9563"/>
        <dbReference type="ChEBI" id="CHEBI:15378"/>
        <dbReference type="ChEBI" id="CHEBI:18151"/>
        <dbReference type="ChEBI" id="CHEBI:55437"/>
        <dbReference type="ChEBI" id="CHEBI:57856"/>
        <dbReference type="ChEBI" id="CHEBI:59789"/>
        <dbReference type="EC" id="2.1.1.163"/>
    </reaction>
</comment>
<comment type="catalytic activity">
    <reaction evidence="1">
        <text>a 2-methoxy-6-(all-trans-polyprenyl)benzene-1,4-diol + S-adenosyl-L-methionine = a 5-methoxy-2-methyl-3-(all-trans-polyprenyl)benzene-1,4-diol + S-adenosyl-L-homocysteine + H(+)</text>
        <dbReference type="Rhea" id="RHEA:28286"/>
        <dbReference type="Rhea" id="RHEA-COMP:10858"/>
        <dbReference type="Rhea" id="RHEA-COMP:10859"/>
        <dbReference type="ChEBI" id="CHEBI:15378"/>
        <dbReference type="ChEBI" id="CHEBI:57856"/>
        <dbReference type="ChEBI" id="CHEBI:59789"/>
        <dbReference type="ChEBI" id="CHEBI:84166"/>
        <dbReference type="ChEBI" id="CHEBI:84167"/>
        <dbReference type="EC" id="2.1.1.201"/>
    </reaction>
</comment>
<comment type="pathway">
    <text evidence="1">Quinol/quinone metabolism; menaquinone biosynthesis; menaquinol from 1,4-dihydroxy-2-naphthoate: step 2/2.</text>
</comment>
<comment type="pathway">
    <text evidence="1">Cofactor biosynthesis; ubiquinone biosynthesis.</text>
</comment>
<comment type="similarity">
    <text evidence="1">Belongs to the class I-like SAM-binding methyltransferase superfamily. MenG/UbiE family.</text>
</comment>
<dbReference type="EC" id="2.1.1.163" evidence="1"/>
<dbReference type="EC" id="2.1.1.201" evidence="1"/>
<dbReference type="EMBL" id="AP009240">
    <property type="protein sequence ID" value="BAG79645.1"/>
    <property type="molecule type" value="Genomic_DNA"/>
</dbReference>
<dbReference type="RefSeq" id="WP_000227958.1">
    <property type="nucleotide sequence ID" value="NC_011415.1"/>
</dbReference>
<dbReference type="SMR" id="B6I4H5"/>
<dbReference type="GeneID" id="93778102"/>
<dbReference type="KEGG" id="ecy:ECSE_4121"/>
<dbReference type="HOGENOM" id="CLU_037990_0_0_6"/>
<dbReference type="UniPathway" id="UPA00079">
    <property type="reaction ID" value="UER00169"/>
</dbReference>
<dbReference type="UniPathway" id="UPA00232"/>
<dbReference type="Proteomes" id="UP000008199">
    <property type="component" value="Chromosome"/>
</dbReference>
<dbReference type="GO" id="GO:0008425">
    <property type="term" value="F:2-methoxy-6-polyprenyl-1,4-benzoquinol methyltransferase activity"/>
    <property type="evidence" value="ECO:0007669"/>
    <property type="project" value="UniProtKB-UniRule"/>
</dbReference>
<dbReference type="GO" id="GO:0043770">
    <property type="term" value="F:demethylmenaquinone methyltransferase activity"/>
    <property type="evidence" value="ECO:0007669"/>
    <property type="project" value="UniProtKB-UniRule"/>
</dbReference>
<dbReference type="GO" id="GO:0009060">
    <property type="term" value="P:aerobic respiration"/>
    <property type="evidence" value="ECO:0007669"/>
    <property type="project" value="UniProtKB-UniRule"/>
</dbReference>
<dbReference type="GO" id="GO:0009234">
    <property type="term" value="P:menaquinone biosynthetic process"/>
    <property type="evidence" value="ECO:0007669"/>
    <property type="project" value="UniProtKB-UniRule"/>
</dbReference>
<dbReference type="GO" id="GO:0032259">
    <property type="term" value="P:methylation"/>
    <property type="evidence" value="ECO:0007669"/>
    <property type="project" value="UniProtKB-KW"/>
</dbReference>
<dbReference type="CDD" id="cd02440">
    <property type="entry name" value="AdoMet_MTases"/>
    <property type="match status" value="1"/>
</dbReference>
<dbReference type="FunFam" id="3.40.50.150:FF:000014">
    <property type="entry name" value="Ubiquinone/menaquinone biosynthesis C-methyltransferase UbiE"/>
    <property type="match status" value="1"/>
</dbReference>
<dbReference type="Gene3D" id="3.40.50.150">
    <property type="entry name" value="Vaccinia Virus protein VP39"/>
    <property type="match status" value="1"/>
</dbReference>
<dbReference type="HAMAP" id="MF_01813">
    <property type="entry name" value="MenG_UbiE_methyltr"/>
    <property type="match status" value="1"/>
</dbReference>
<dbReference type="InterPro" id="IPR029063">
    <property type="entry name" value="SAM-dependent_MTases_sf"/>
</dbReference>
<dbReference type="InterPro" id="IPR004033">
    <property type="entry name" value="UbiE/COQ5_MeTrFase"/>
</dbReference>
<dbReference type="InterPro" id="IPR023576">
    <property type="entry name" value="UbiE/COQ5_MeTrFase_CS"/>
</dbReference>
<dbReference type="NCBIfam" id="TIGR01934">
    <property type="entry name" value="MenG_MenH_UbiE"/>
    <property type="match status" value="1"/>
</dbReference>
<dbReference type="NCBIfam" id="NF001240">
    <property type="entry name" value="PRK00216.1-1"/>
    <property type="match status" value="1"/>
</dbReference>
<dbReference type="NCBIfam" id="NF001242">
    <property type="entry name" value="PRK00216.1-3"/>
    <property type="match status" value="1"/>
</dbReference>
<dbReference type="NCBIfam" id="NF001244">
    <property type="entry name" value="PRK00216.1-5"/>
    <property type="match status" value="1"/>
</dbReference>
<dbReference type="PANTHER" id="PTHR43591:SF24">
    <property type="entry name" value="2-METHOXY-6-POLYPRENYL-1,4-BENZOQUINOL METHYLASE, MITOCHONDRIAL"/>
    <property type="match status" value="1"/>
</dbReference>
<dbReference type="PANTHER" id="PTHR43591">
    <property type="entry name" value="METHYLTRANSFERASE"/>
    <property type="match status" value="1"/>
</dbReference>
<dbReference type="Pfam" id="PF01209">
    <property type="entry name" value="Ubie_methyltran"/>
    <property type="match status" value="1"/>
</dbReference>
<dbReference type="SUPFAM" id="SSF53335">
    <property type="entry name" value="S-adenosyl-L-methionine-dependent methyltransferases"/>
    <property type="match status" value="1"/>
</dbReference>
<dbReference type="PROSITE" id="PS51608">
    <property type="entry name" value="SAM_MT_UBIE"/>
    <property type="match status" value="1"/>
</dbReference>
<dbReference type="PROSITE" id="PS01183">
    <property type="entry name" value="UBIE_1"/>
    <property type="match status" value="1"/>
</dbReference>
<dbReference type="PROSITE" id="PS01184">
    <property type="entry name" value="UBIE_2"/>
    <property type="match status" value="1"/>
</dbReference>
<proteinExistence type="inferred from homology"/>
<accession>B6I4H5</accession>
<protein>
    <recommendedName>
        <fullName evidence="1">Ubiquinone/menaquinone biosynthesis C-methyltransferase UbiE</fullName>
        <ecNumber evidence="1">2.1.1.163</ecNumber>
        <ecNumber evidence="1">2.1.1.201</ecNumber>
    </recommendedName>
    <alternativeName>
        <fullName evidence="1">2-methoxy-6-polyprenyl-1,4-benzoquinol methylase</fullName>
    </alternativeName>
    <alternativeName>
        <fullName evidence="1">Demethylmenaquinone methyltransferase</fullName>
    </alternativeName>
</protein>
<feature type="chain" id="PRO_1000187763" description="Ubiquinone/menaquinone biosynthesis C-methyltransferase UbiE">
    <location>
        <begin position="1"/>
        <end position="251"/>
    </location>
</feature>
<feature type="binding site" evidence="1">
    <location>
        <position position="74"/>
    </location>
    <ligand>
        <name>S-adenosyl-L-methionine</name>
        <dbReference type="ChEBI" id="CHEBI:59789"/>
    </ligand>
</feature>
<feature type="binding site" evidence="1">
    <location>
        <position position="95"/>
    </location>
    <ligand>
        <name>S-adenosyl-L-methionine</name>
        <dbReference type="ChEBI" id="CHEBI:59789"/>
    </ligand>
</feature>
<feature type="binding site" evidence="1">
    <location>
        <begin position="123"/>
        <end position="124"/>
    </location>
    <ligand>
        <name>S-adenosyl-L-methionine</name>
        <dbReference type="ChEBI" id="CHEBI:59789"/>
    </ligand>
</feature>
<feature type="binding site" evidence="1">
    <location>
        <position position="140"/>
    </location>
    <ligand>
        <name>S-adenosyl-L-methionine</name>
        <dbReference type="ChEBI" id="CHEBI:59789"/>
    </ligand>
</feature>
<name>UBIE_ECOSE</name>
<sequence length="251" mass="28073">MVDKSQETTHFGFQTVAKEQKADMVAHVFHSVASKYDVMNDLMSFGIHRLWKRFTIDCSGVRRGQTVLDLAGGTGDLTAKFSRLVGETGKVVLADINESMLKMGREKLRNIGVIGNVEYVQANAEALPFPDNTFDCITISFGLRNVTDKDKALRSMYRVLKPGGRLLVLEFSKPIIEPLSKAYDAYSFHVLPRIGSLVANDADSYRYLAESIRMHPDQDTLKAMMQDAGFESVDYYNLTAGVVALHRGYKF</sequence>
<gene>
    <name evidence="1" type="primary">ubiE</name>
    <name type="ordered locus">ECSE_4121</name>
</gene>
<keyword id="KW-0474">Menaquinone biosynthesis</keyword>
<keyword id="KW-0489">Methyltransferase</keyword>
<keyword id="KW-0949">S-adenosyl-L-methionine</keyword>
<keyword id="KW-0808">Transferase</keyword>
<keyword id="KW-0831">Ubiquinone biosynthesis</keyword>
<reference key="1">
    <citation type="journal article" date="2008" name="DNA Res.">
        <title>Complete genome sequence and comparative analysis of the wild-type commensal Escherichia coli strain SE11 isolated from a healthy adult.</title>
        <authorList>
            <person name="Oshima K."/>
            <person name="Toh H."/>
            <person name="Ogura Y."/>
            <person name="Sasamoto H."/>
            <person name="Morita H."/>
            <person name="Park S.-H."/>
            <person name="Ooka T."/>
            <person name="Iyoda S."/>
            <person name="Taylor T.D."/>
            <person name="Hayashi T."/>
            <person name="Itoh K."/>
            <person name="Hattori M."/>
        </authorList>
    </citation>
    <scope>NUCLEOTIDE SEQUENCE [LARGE SCALE GENOMIC DNA]</scope>
    <source>
        <strain>SE11</strain>
    </source>
</reference>
<organism>
    <name type="scientific">Escherichia coli (strain SE11)</name>
    <dbReference type="NCBI Taxonomy" id="409438"/>
    <lineage>
        <taxon>Bacteria</taxon>
        <taxon>Pseudomonadati</taxon>
        <taxon>Pseudomonadota</taxon>
        <taxon>Gammaproteobacteria</taxon>
        <taxon>Enterobacterales</taxon>
        <taxon>Enterobacteriaceae</taxon>
        <taxon>Escherichia</taxon>
    </lineage>
</organism>